<dbReference type="EMBL" id="AE000516">
    <property type="protein sequence ID" value="AAK45670.1"/>
    <property type="molecule type" value="Genomic_DNA"/>
</dbReference>
<dbReference type="PIR" id="A70742">
    <property type="entry name" value="A70742"/>
</dbReference>
<dbReference type="RefSeq" id="WP_003407152.1">
    <property type="nucleotide sequence ID" value="NZ_KK341227.1"/>
</dbReference>
<dbReference type="KEGG" id="mtc:MT1407"/>
<dbReference type="PATRIC" id="fig|83331.31.peg.1514"/>
<dbReference type="HOGENOM" id="CLU_072301_3_1_11"/>
<dbReference type="Proteomes" id="UP000001020">
    <property type="component" value="Chromosome"/>
</dbReference>
<dbReference type="GO" id="GO:0016020">
    <property type="term" value="C:membrane"/>
    <property type="evidence" value="ECO:0007669"/>
    <property type="project" value="UniProtKB-SubCell"/>
</dbReference>
<dbReference type="Gene3D" id="3.10.450.50">
    <property type="match status" value="1"/>
</dbReference>
<dbReference type="PANTHER" id="PTHR37042">
    <property type="entry name" value="OUTER MEMBRANE PROTEIN RV1973"/>
    <property type="match status" value="1"/>
</dbReference>
<dbReference type="PANTHER" id="PTHR37042:SF4">
    <property type="entry name" value="OUTER MEMBRANE PROTEIN RV1973"/>
    <property type="match status" value="1"/>
</dbReference>
<proteinExistence type="predicted"/>
<accession>P9WM00</accession>
<accession>L0T819</accession>
<accession>Q11032</accession>
<name>Y1362_MYCTO</name>
<keyword id="KW-0472">Membrane</keyword>
<keyword id="KW-1185">Reference proteome</keyword>
<keyword id="KW-0812">Transmembrane</keyword>
<keyword id="KW-1133">Transmembrane helix</keyword>
<reference key="1">
    <citation type="journal article" date="2002" name="J. Bacteriol.">
        <title>Whole-genome comparison of Mycobacterium tuberculosis clinical and laboratory strains.</title>
        <authorList>
            <person name="Fleischmann R.D."/>
            <person name="Alland D."/>
            <person name="Eisen J.A."/>
            <person name="Carpenter L."/>
            <person name="White O."/>
            <person name="Peterson J.D."/>
            <person name="DeBoy R.T."/>
            <person name="Dodson R.J."/>
            <person name="Gwinn M.L."/>
            <person name="Haft D.H."/>
            <person name="Hickey E.K."/>
            <person name="Kolonay J.F."/>
            <person name="Nelson W.C."/>
            <person name="Umayam L.A."/>
            <person name="Ermolaeva M.D."/>
            <person name="Salzberg S.L."/>
            <person name="Delcher A."/>
            <person name="Utterback T.R."/>
            <person name="Weidman J.F."/>
            <person name="Khouri H.M."/>
            <person name="Gill J."/>
            <person name="Mikula A."/>
            <person name="Bishai W."/>
            <person name="Jacobs W.R. Jr."/>
            <person name="Venter J.C."/>
            <person name="Fraser C.M."/>
        </authorList>
    </citation>
    <scope>NUCLEOTIDE SEQUENCE [LARGE SCALE GENOMIC DNA]</scope>
    <source>
        <strain>CDC 1551 / Oshkosh</strain>
    </source>
</reference>
<organism>
    <name type="scientific">Mycobacterium tuberculosis (strain CDC 1551 / Oshkosh)</name>
    <dbReference type="NCBI Taxonomy" id="83331"/>
    <lineage>
        <taxon>Bacteria</taxon>
        <taxon>Bacillati</taxon>
        <taxon>Actinomycetota</taxon>
        <taxon>Actinomycetes</taxon>
        <taxon>Mycobacteriales</taxon>
        <taxon>Mycobacteriaceae</taxon>
        <taxon>Mycobacterium</taxon>
        <taxon>Mycobacterium tuberculosis complex</taxon>
    </lineage>
</organism>
<protein>
    <recommendedName>
        <fullName>Uncharacterized protein MT1407</fullName>
    </recommendedName>
</protein>
<evidence type="ECO:0000255" key="1"/>
<evidence type="ECO:0000256" key="2">
    <source>
        <dbReference type="SAM" id="MobiDB-lite"/>
    </source>
</evidence>
<evidence type="ECO:0000305" key="3"/>
<comment type="subcellular location">
    <subcellularLocation>
        <location evidence="3">Membrane</location>
        <topology evidence="3">Single-pass membrane protein</topology>
    </subcellularLocation>
</comment>
<comment type="similarity">
    <text evidence="3">To M.tuberculosis Rv1363c.</text>
</comment>
<sequence length="220" mass="23503">MTDDVRDVNTETTDATEVAEIDSAAGEAGDSATEAFDTDSATESTAQKGQRHRDLWRMQVTLKPVPVILILLMLISGGATGWLYLEQYRPDQQTDSGAARAAVAAASDGTIALLSYSPDTLDQDFATARSHLAGDFLSYYDQFTQQIVAPAAKQKSLKTTAKVVRAAVSELHPDSAVVLVFVDQSTTSKDSPNPSMAASSVMVTLAKVDGNWLITKFTPV</sequence>
<gene>
    <name type="ordered locus">MT1407</name>
</gene>
<feature type="chain" id="PRO_0000427390" description="Uncharacterized protein MT1407">
    <location>
        <begin position="1"/>
        <end position="220"/>
    </location>
</feature>
<feature type="transmembrane region" description="Helical" evidence="1">
    <location>
        <begin position="65"/>
        <end position="85"/>
    </location>
</feature>
<feature type="region of interest" description="Disordered" evidence="2">
    <location>
        <begin position="1"/>
        <end position="50"/>
    </location>
</feature>
<feature type="compositionally biased region" description="Polar residues" evidence="2">
    <location>
        <begin position="39"/>
        <end position="48"/>
    </location>
</feature>